<feature type="chain" id="PRO_0000292837" description="sn-glycerol-3-phosphate transport system permease protein UgpA">
    <location>
        <begin position="1"/>
        <end position="295"/>
    </location>
</feature>
<feature type="topological domain" description="Cytoplasmic" evidence="2">
    <location>
        <begin position="1"/>
        <end position="11"/>
    </location>
</feature>
<feature type="transmembrane region" description="Helical" evidence="3">
    <location>
        <begin position="12"/>
        <end position="32"/>
    </location>
</feature>
<feature type="topological domain" description="Periplasmic" evidence="2">
    <location>
        <begin position="33"/>
        <end position="80"/>
    </location>
</feature>
<feature type="transmembrane region" description="Helical" evidence="3">
    <location>
        <begin position="81"/>
        <end position="101"/>
    </location>
</feature>
<feature type="topological domain" description="Cytoplasmic" evidence="2">
    <location>
        <begin position="102"/>
        <end position="109"/>
    </location>
</feature>
<feature type="transmembrane region" description="Helical" evidence="3">
    <location>
        <begin position="110"/>
        <end position="130"/>
    </location>
</feature>
<feature type="topological domain" description="Periplasmic" evidence="2">
    <location>
        <begin position="131"/>
        <end position="157"/>
    </location>
</feature>
<feature type="transmembrane region" description="Helical" evidence="3">
    <location>
        <begin position="158"/>
        <end position="178"/>
    </location>
</feature>
<feature type="topological domain" description="Cytoplasmic" evidence="2">
    <location>
        <begin position="179"/>
        <end position="207"/>
    </location>
</feature>
<feature type="transmembrane region" description="Helical" evidence="3">
    <location>
        <begin position="208"/>
        <end position="228"/>
    </location>
</feature>
<feature type="topological domain" description="Periplasmic" evidence="2">
    <location>
        <begin position="229"/>
        <end position="262"/>
    </location>
</feature>
<feature type="transmembrane region" description="Helical" evidence="3">
    <location>
        <begin position="263"/>
        <end position="283"/>
    </location>
</feature>
<feature type="topological domain" description="Cytoplasmic" evidence="2">
    <location>
        <begin position="284"/>
        <end position="295"/>
    </location>
</feature>
<feature type="domain" description="ABC transmembrane type-1" evidence="3">
    <location>
        <begin position="72"/>
        <end position="284"/>
    </location>
</feature>
<evidence type="ECO:0000250" key="1">
    <source>
        <dbReference type="UniProtKB" id="P10905"/>
    </source>
</evidence>
<evidence type="ECO:0000255" key="2"/>
<evidence type="ECO:0000255" key="3">
    <source>
        <dbReference type="PROSITE-ProRule" id="PRU00441"/>
    </source>
</evidence>
<evidence type="ECO:0000305" key="4"/>
<reference key="1">
    <citation type="journal article" date="2006" name="J. Bacteriol.">
        <title>Complete genome sequence of Yersinia pestis strains Antiqua and Nepal516: evidence of gene reduction in an emerging pathogen.</title>
        <authorList>
            <person name="Chain P.S.G."/>
            <person name="Hu P."/>
            <person name="Malfatti S.A."/>
            <person name="Radnedge L."/>
            <person name="Larimer F."/>
            <person name="Vergez L.M."/>
            <person name="Worsham P."/>
            <person name="Chu M.C."/>
            <person name="Andersen G.L."/>
        </authorList>
    </citation>
    <scope>NUCLEOTIDE SEQUENCE [LARGE SCALE GENOMIC DNA]</scope>
    <source>
        <strain>Nepal516</strain>
    </source>
</reference>
<reference key="2">
    <citation type="submission" date="2009-04" db="EMBL/GenBank/DDBJ databases">
        <title>Yersinia pestis Nepal516A whole genome shotgun sequencing project.</title>
        <authorList>
            <person name="Plunkett G. III"/>
            <person name="Anderson B.D."/>
            <person name="Baumler D.J."/>
            <person name="Burland V."/>
            <person name="Cabot E.L."/>
            <person name="Glasner J.D."/>
            <person name="Mau B."/>
            <person name="Neeno-Eckwall E."/>
            <person name="Perna N.T."/>
            <person name="Munk A.C."/>
            <person name="Tapia R."/>
            <person name="Green L.D."/>
            <person name="Rogers Y.C."/>
            <person name="Detter J.C."/>
            <person name="Bruce D.C."/>
            <person name="Brettin T.S."/>
        </authorList>
    </citation>
    <scope>NUCLEOTIDE SEQUENCE [LARGE SCALE GENOMIC DNA]</scope>
    <source>
        <strain>Nepal516</strain>
    </source>
</reference>
<sequence length="295" mass="32503">MSPSRPGFSCSWLPYLLVLPQLAITAIFFLWPAGEALWYSVQTLDPFGLSSEFVGLSNFIQLFQDEYYLASFYTTLIFSALVAGIGLIVSLFLAAMVNYVLRGSRLYQTLLILPYAVAPAVAAVLWIFLFDPGLGLITHALAKLGYSWNHAQNSGQAMFLVVLASVWKQISYNFLFFLAALQSIPKSLVEAAAIDGAGPVRRFFNLVLPLISPVSFFLLVVNLVYAFFDTFPVIDAATGGGPVQATTTLIYKIYREGFAGLDLSSSAAQSVILMLLVIGLTVIQFRFVERKVRYQ</sequence>
<comment type="function">
    <text evidence="1">Part of the ABC transporter complex UgpBAEC involved in sn-glycerol-3-phosphate (G3P) import. Probably responsible for the translocation of the substrate across the membrane.</text>
</comment>
<comment type="subunit">
    <text evidence="1">The complex is composed of two ATP-binding proteins (UgpC), two transmembrane proteins (UgpA and UgpE) and a solute-binding protein (UgpB).</text>
</comment>
<comment type="subcellular location">
    <subcellularLocation>
        <location evidence="1">Cell inner membrane</location>
        <topology evidence="2">Multi-pass membrane protein</topology>
    </subcellularLocation>
</comment>
<comment type="similarity">
    <text evidence="4">Belongs to the binding-protein-dependent transport system permease family. UgpAE subfamily.</text>
</comment>
<dbReference type="EMBL" id="CP000305">
    <property type="protein sequence ID" value="ABG16502.1"/>
    <property type="molecule type" value="Genomic_DNA"/>
</dbReference>
<dbReference type="EMBL" id="ACNQ01000001">
    <property type="protein sequence ID" value="EEO78615.1"/>
    <property type="molecule type" value="Genomic_DNA"/>
</dbReference>
<dbReference type="RefSeq" id="WP_002211521.1">
    <property type="nucleotide sequence ID" value="NZ_ACNQ01000001.1"/>
</dbReference>
<dbReference type="SMR" id="Q1CNC8"/>
<dbReference type="GeneID" id="57974913"/>
<dbReference type="KEGG" id="ypn:YPN_0169"/>
<dbReference type="HOGENOM" id="CLU_016047_0_2_6"/>
<dbReference type="Proteomes" id="UP000008936">
    <property type="component" value="Chromosome"/>
</dbReference>
<dbReference type="GO" id="GO:0005886">
    <property type="term" value="C:plasma membrane"/>
    <property type="evidence" value="ECO:0007669"/>
    <property type="project" value="UniProtKB-SubCell"/>
</dbReference>
<dbReference type="GO" id="GO:0055085">
    <property type="term" value="P:transmembrane transport"/>
    <property type="evidence" value="ECO:0007669"/>
    <property type="project" value="InterPro"/>
</dbReference>
<dbReference type="CDD" id="cd06261">
    <property type="entry name" value="TM_PBP2"/>
    <property type="match status" value="1"/>
</dbReference>
<dbReference type="FunFam" id="1.10.3720.10:FF:000028">
    <property type="entry name" value="sn-glycerol-3-phosphate ABC transporter permease UgpA"/>
    <property type="match status" value="1"/>
</dbReference>
<dbReference type="Gene3D" id="1.10.3720.10">
    <property type="entry name" value="MetI-like"/>
    <property type="match status" value="1"/>
</dbReference>
<dbReference type="InterPro" id="IPR000515">
    <property type="entry name" value="MetI-like"/>
</dbReference>
<dbReference type="InterPro" id="IPR035906">
    <property type="entry name" value="MetI-like_sf"/>
</dbReference>
<dbReference type="InterPro" id="IPR050809">
    <property type="entry name" value="UgpAE/MalFG_permease"/>
</dbReference>
<dbReference type="NCBIfam" id="NF007852">
    <property type="entry name" value="PRK10561.1"/>
    <property type="match status" value="1"/>
</dbReference>
<dbReference type="PANTHER" id="PTHR43227">
    <property type="entry name" value="BLL4140 PROTEIN"/>
    <property type="match status" value="1"/>
</dbReference>
<dbReference type="PANTHER" id="PTHR43227:SF9">
    <property type="entry name" value="SN-GLYCEROL-3-PHOSPHATE TRANSPORT SYSTEM PERMEASE PROTEIN UGPA"/>
    <property type="match status" value="1"/>
</dbReference>
<dbReference type="Pfam" id="PF00528">
    <property type="entry name" value="BPD_transp_1"/>
    <property type="match status" value="1"/>
</dbReference>
<dbReference type="SUPFAM" id="SSF161098">
    <property type="entry name" value="MetI-like"/>
    <property type="match status" value="1"/>
</dbReference>
<dbReference type="PROSITE" id="PS50928">
    <property type="entry name" value="ABC_TM1"/>
    <property type="match status" value="1"/>
</dbReference>
<accession>Q1CNC8</accession>
<accession>D1Q161</accession>
<gene>
    <name type="primary">ugpA</name>
    <name type="ordered locus">YPN_0169</name>
    <name type="ORF">YP516_0134</name>
</gene>
<keyword id="KW-0997">Cell inner membrane</keyword>
<keyword id="KW-1003">Cell membrane</keyword>
<keyword id="KW-0472">Membrane</keyword>
<keyword id="KW-0812">Transmembrane</keyword>
<keyword id="KW-1133">Transmembrane helix</keyword>
<keyword id="KW-0813">Transport</keyword>
<name>UGPA_YERPN</name>
<organism>
    <name type="scientific">Yersinia pestis bv. Antiqua (strain Nepal516)</name>
    <dbReference type="NCBI Taxonomy" id="377628"/>
    <lineage>
        <taxon>Bacteria</taxon>
        <taxon>Pseudomonadati</taxon>
        <taxon>Pseudomonadota</taxon>
        <taxon>Gammaproteobacteria</taxon>
        <taxon>Enterobacterales</taxon>
        <taxon>Yersiniaceae</taxon>
        <taxon>Yersinia</taxon>
    </lineage>
</organism>
<proteinExistence type="inferred from homology"/>
<protein>
    <recommendedName>
        <fullName evidence="1">sn-glycerol-3-phosphate transport system permease protein UgpA</fullName>
    </recommendedName>
</protein>